<gene>
    <name type="primary">MT-ND4L</name>
    <name type="synonym">MTND4L</name>
    <name type="synonym">NADH4L</name>
    <name type="synonym">ND4L</name>
</gene>
<proteinExistence type="inferred from homology"/>
<protein>
    <recommendedName>
        <fullName>NADH-ubiquinone oxidoreductase chain 4L</fullName>
        <ecNumber>7.1.1.2</ecNumber>
    </recommendedName>
    <alternativeName>
        <fullName>NADH dehydrogenase subunit 4L</fullName>
    </alternativeName>
</protein>
<comment type="function">
    <text evidence="1">Core subunit of the mitochondrial membrane respiratory chain NADH dehydrogenase (Complex I) which catalyzes electron transfer from NADH through the respiratory chain, using ubiquinone as an electron acceptor. Part of the enzyme membrane arm which is embedded in the lipid bilayer and involved in proton translocation.</text>
</comment>
<comment type="catalytic activity">
    <reaction evidence="1">
        <text>a ubiquinone + NADH + 5 H(+)(in) = a ubiquinol + NAD(+) + 4 H(+)(out)</text>
        <dbReference type="Rhea" id="RHEA:29091"/>
        <dbReference type="Rhea" id="RHEA-COMP:9565"/>
        <dbReference type="Rhea" id="RHEA-COMP:9566"/>
        <dbReference type="ChEBI" id="CHEBI:15378"/>
        <dbReference type="ChEBI" id="CHEBI:16389"/>
        <dbReference type="ChEBI" id="CHEBI:17976"/>
        <dbReference type="ChEBI" id="CHEBI:57540"/>
        <dbReference type="ChEBI" id="CHEBI:57945"/>
        <dbReference type="EC" id="7.1.1.2"/>
    </reaction>
    <physiologicalReaction direction="left-to-right" evidence="1">
        <dbReference type="Rhea" id="RHEA:29092"/>
    </physiologicalReaction>
</comment>
<comment type="subunit">
    <text evidence="2">Core subunit of respiratory chain NADH dehydrogenase (Complex I) which is composed of 45 different subunits.</text>
</comment>
<comment type="subcellular location">
    <subcellularLocation>
        <location evidence="2">Mitochondrion inner membrane</location>
        <topology evidence="3">Multi-pass membrane protein</topology>
    </subcellularLocation>
</comment>
<comment type="similarity">
    <text evidence="4">Belongs to the complex I subunit 4L family.</text>
</comment>
<feature type="chain" id="PRO_0000275117" description="NADH-ubiquinone oxidoreductase chain 4L">
    <location>
        <begin position="1"/>
        <end position="98"/>
    </location>
</feature>
<feature type="transmembrane region" description="Helical" evidence="3">
    <location>
        <begin position="1"/>
        <end position="21"/>
    </location>
</feature>
<feature type="transmembrane region" description="Helical" evidence="3">
    <location>
        <begin position="29"/>
        <end position="49"/>
    </location>
</feature>
<feature type="transmembrane region" description="Helical" evidence="3">
    <location>
        <begin position="61"/>
        <end position="81"/>
    </location>
</feature>
<sequence length="98" mass="10727">MALIYTNTLLAFTISLLGLLLYRSHLMSSLLCLEGMMLSMFVMVAVMILNTHLTTSSMMPIVLLVFAACEAALGLSLLVMVSNTYGIDHVQNLNLLQC</sequence>
<geneLocation type="mitochondrion"/>
<reference key="1">
    <citation type="journal article" date="2001" name="J. Mol. Evol.">
        <title>Maximum likelihood analysis of the complete mitochondrial genomes of eutherians and a reevaluation of the phylogeny of bats and insectivores.</title>
        <authorList>
            <person name="Nikaido M."/>
            <person name="Kawai K."/>
            <person name="Cao Y."/>
            <person name="Harada M."/>
            <person name="Tomita S."/>
            <person name="Okada N."/>
            <person name="Hasegawa M."/>
        </authorList>
    </citation>
    <scope>NUCLEOTIDE SEQUENCE [GENOMIC DNA]</scope>
</reference>
<accession>Q94N24</accession>
<evidence type="ECO:0000250" key="1">
    <source>
        <dbReference type="UniProtKB" id="P03901"/>
    </source>
</evidence>
<evidence type="ECO:0000250" key="2">
    <source>
        <dbReference type="UniProtKB" id="P03902"/>
    </source>
</evidence>
<evidence type="ECO:0000255" key="3"/>
<evidence type="ECO:0000305" key="4"/>
<name>NU4LM_RHIPI</name>
<keyword id="KW-0249">Electron transport</keyword>
<keyword id="KW-0472">Membrane</keyword>
<keyword id="KW-0496">Mitochondrion</keyword>
<keyword id="KW-0999">Mitochondrion inner membrane</keyword>
<keyword id="KW-0520">NAD</keyword>
<keyword id="KW-0679">Respiratory chain</keyword>
<keyword id="KW-1278">Translocase</keyword>
<keyword id="KW-0812">Transmembrane</keyword>
<keyword id="KW-1133">Transmembrane helix</keyword>
<keyword id="KW-0813">Transport</keyword>
<keyword id="KW-0830">Ubiquinone</keyword>
<organism>
    <name type="scientific">Rhinolophus pumilus</name>
    <name type="common">Horseshoe bat</name>
    <dbReference type="NCBI Taxonomy" id="159859"/>
    <lineage>
        <taxon>Eukaryota</taxon>
        <taxon>Metazoa</taxon>
        <taxon>Chordata</taxon>
        <taxon>Craniata</taxon>
        <taxon>Vertebrata</taxon>
        <taxon>Euteleostomi</taxon>
        <taxon>Mammalia</taxon>
        <taxon>Eutheria</taxon>
        <taxon>Laurasiatheria</taxon>
        <taxon>Chiroptera</taxon>
        <taxon>Yinpterochiroptera</taxon>
        <taxon>Rhinolophoidea</taxon>
        <taxon>Rhinolophidae</taxon>
        <taxon>Rhinolophinae</taxon>
        <taxon>Rhinolophus</taxon>
    </lineage>
</organism>
<dbReference type="EC" id="7.1.1.2"/>
<dbReference type="EMBL" id="AB061526">
    <property type="protein sequence ID" value="BAB70626.1"/>
    <property type="molecule type" value="Genomic_DNA"/>
</dbReference>
<dbReference type="RefSeq" id="NP_976108.1">
    <property type="nucleotide sequence ID" value="NC_005434.1"/>
</dbReference>
<dbReference type="SMR" id="Q94N24"/>
<dbReference type="GeneID" id="2746382"/>
<dbReference type="CTD" id="4539"/>
<dbReference type="GO" id="GO:0005743">
    <property type="term" value="C:mitochondrial inner membrane"/>
    <property type="evidence" value="ECO:0000250"/>
    <property type="project" value="UniProtKB"/>
</dbReference>
<dbReference type="GO" id="GO:0045271">
    <property type="term" value="C:respiratory chain complex I"/>
    <property type="evidence" value="ECO:0000250"/>
    <property type="project" value="UniProtKB"/>
</dbReference>
<dbReference type="GO" id="GO:0008137">
    <property type="term" value="F:NADH dehydrogenase (ubiquinone) activity"/>
    <property type="evidence" value="ECO:0000250"/>
    <property type="project" value="UniProtKB"/>
</dbReference>
<dbReference type="GO" id="GO:0042773">
    <property type="term" value="P:ATP synthesis coupled electron transport"/>
    <property type="evidence" value="ECO:0007669"/>
    <property type="project" value="InterPro"/>
</dbReference>
<dbReference type="FunFam" id="1.10.287.3510:FF:000002">
    <property type="entry name" value="NADH-ubiquinone oxidoreductase chain 4L"/>
    <property type="match status" value="1"/>
</dbReference>
<dbReference type="Gene3D" id="1.10.287.3510">
    <property type="match status" value="1"/>
</dbReference>
<dbReference type="InterPro" id="IPR001133">
    <property type="entry name" value="NADH_UbQ_OxRdtase_chain4L/K"/>
</dbReference>
<dbReference type="InterPro" id="IPR039428">
    <property type="entry name" value="NUOK/Mnh_C1-like"/>
</dbReference>
<dbReference type="PANTHER" id="PTHR11434:SF0">
    <property type="entry name" value="NADH-UBIQUINONE OXIDOREDUCTASE CHAIN 4L"/>
    <property type="match status" value="1"/>
</dbReference>
<dbReference type="PANTHER" id="PTHR11434">
    <property type="entry name" value="NADH-UBIQUINONE OXIDOREDUCTASE SUBUNIT ND4L"/>
    <property type="match status" value="1"/>
</dbReference>
<dbReference type="Pfam" id="PF00420">
    <property type="entry name" value="Oxidored_q2"/>
    <property type="match status" value="1"/>
</dbReference>